<reference key="1">
    <citation type="journal article" date="1998" name="Nature">
        <title>Deciphering the biology of Mycobacterium tuberculosis from the complete genome sequence.</title>
        <authorList>
            <person name="Cole S.T."/>
            <person name="Brosch R."/>
            <person name="Parkhill J."/>
            <person name="Garnier T."/>
            <person name="Churcher C.M."/>
            <person name="Harris D.E."/>
            <person name="Gordon S.V."/>
            <person name="Eiglmeier K."/>
            <person name="Gas S."/>
            <person name="Barry C.E. III"/>
            <person name="Tekaia F."/>
            <person name="Badcock K."/>
            <person name="Basham D."/>
            <person name="Brown D."/>
            <person name="Chillingworth T."/>
            <person name="Connor R."/>
            <person name="Davies R.M."/>
            <person name="Devlin K."/>
            <person name="Feltwell T."/>
            <person name="Gentles S."/>
            <person name="Hamlin N."/>
            <person name="Holroyd S."/>
            <person name="Hornsby T."/>
            <person name="Jagels K."/>
            <person name="Krogh A."/>
            <person name="McLean J."/>
            <person name="Moule S."/>
            <person name="Murphy L.D."/>
            <person name="Oliver S."/>
            <person name="Osborne J."/>
            <person name="Quail M.A."/>
            <person name="Rajandream M.A."/>
            <person name="Rogers J."/>
            <person name="Rutter S."/>
            <person name="Seeger K."/>
            <person name="Skelton S."/>
            <person name="Squares S."/>
            <person name="Squares R."/>
            <person name="Sulston J.E."/>
            <person name="Taylor K."/>
            <person name="Whitehead S."/>
            <person name="Barrell B.G."/>
        </authorList>
    </citation>
    <scope>NUCLEOTIDE SEQUENCE [LARGE SCALE GENOMIC DNA]</scope>
    <source>
        <strain>ATCC 25618 / H37Rv</strain>
    </source>
</reference>
<reference key="2">
    <citation type="journal article" date="2011" name="Mol. Cell. Proteomics">
        <title>Proteogenomic analysis of Mycobacterium tuberculosis by high resolution mass spectrometry.</title>
        <authorList>
            <person name="Kelkar D.S."/>
            <person name="Kumar D."/>
            <person name="Kumar P."/>
            <person name="Balakrishnan L."/>
            <person name="Muthusamy B."/>
            <person name="Yadav A.K."/>
            <person name="Shrivastava P."/>
            <person name="Marimuthu A."/>
            <person name="Anand S."/>
            <person name="Sundaram H."/>
            <person name="Kingsbury R."/>
            <person name="Harsha H.C."/>
            <person name="Nair B."/>
            <person name="Prasad T.S."/>
            <person name="Chauhan D.S."/>
            <person name="Katoch K."/>
            <person name="Katoch V.M."/>
            <person name="Kumar P."/>
            <person name="Chaerkady R."/>
            <person name="Ramachandran S."/>
            <person name="Dash D."/>
            <person name="Pandey A."/>
        </authorList>
    </citation>
    <scope>IDENTIFICATION BY MASS SPECTROMETRY [LARGE SCALE ANALYSIS]</scope>
    <source>
        <strain>ATCC 25618 / H37Rv</strain>
    </source>
</reference>
<gene>
    <name type="ordered locus">Rv3788</name>
    <name type="ORF">MTCY13D12.22</name>
</gene>
<name>Y3788_MYCTU</name>
<organism>
    <name type="scientific">Mycobacterium tuberculosis (strain ATCC 25618 / H37Rv)</name>
    <dbReference type="NCBI Taxonomy" id="83332"/>
    <lineage>
        <taxon>Bacteria</taxon>
        <taxon>Bacillati</taxon>
        <taxon>Actinomycetota</taxon>
        <taxon>Actinomycetes</taxon>
        <taxon>Mycobacteriales</taxon>
        <taxon>Mycobacteriaceae</taxon>
        <taxon>Mycobacterium</taxon>
        <taxon>Mycobacterium tuberculosis complex</taxon>
    </lineage>
</organism>
<proteinExistence type="evidence at protein level"/>
<protein>
    <recommendedName>
        <fullName>Uncharacterized protein Rv3788</fullName>
    </recommendedName>
</protein>
<accession>P9WKW7</accession>
<accession>L0TF93</accession>
<accession>P65095</accession>
<accession>P72054</accession>
<keyword id="KW-1185">Reference proteome</keyword>
<sequence>MSEKVESKGLADAARDHLAAELARLRQRRDRLEVEVKNDRGMIGDHGDAAEAIQRADELAILGDRINELDRRLRTGPTPWSGSETLPGGTEVTLRFPDGEVVTMHVISVVEETPVGREAETLTARSPLGQALAGHQPGDTVTYSTPQGPNQVQLLAVKLPS</sequence>
<dbReference type="EMBL" id="AL123456">
    <property type="protein sequence ID" value="CCP46617.1"/>
    <property type="molecule type" value="Genomic_DNA"/>
</dbReference>
<dbReference type="PIR" id="H70696">
    <property type="entry name" value="H70696"/>
</dbReference>
<dbReference type="RefSeq" id="NP_218305.1">
    <property type="nucleotide sequence ID" value="NC_000962.3"/>
</dbReference>
<dbReference type="RefSeq" id="WP_003420624.1">
    <property type="nucleotide sequence ID" value="NZ_NVQJ01000009.1"/>
</dbReference>
<dbReference type="SMR" id="P9WKW7"/>
<dbReference type="FunCoup" id="P9WKW7">
    <property type="interactions" value="4"/>
</dbReference>
<dbReference type="IntAct" id="P9WKW7">
    <property type="interactions" value="4"/>
</dbReference>
<dbReference type="STRING" id="83332.Rv3788"/>
<dbReference type="PaxDb" id="83332-Rv3788"/>
<dbReference type="GeneID" id="886120"/>
<dbReference type="KEGG" id="mtu:Rv3788"/>
<dbReference type="KEGG" id="mtv:RVBD_3788"/>
<dbReference type="TubercuList" id="Rv3788"/>
<dbReference type="eggNOG" id="COG0782">
    <property type="taxonomic scope" value="Bacteria"/>
</dbReference>
<dbReference type="InParanoid" id="P9WKW7"/>
<dbReference type="OrthoDB" id="3823115at2"/>
<dbReference type="PhylomeDB" id="P9WKW7"/>
<dbReference type="Proteomes" id="UP000001584">
    <property type="component" value="Chromosome"/>
</dbReference>
<dbReference type="GO" id="GO:0003677">
    <property type="term" value="F:DNA binding"/>
    <property type="evidence" value="ECO:0007669"/>
    <property type="project" value="InterPro"/>
</dbReference>
<dbReference type="GO" id="GO:0070063">
    <property type="term" value="F:RNA polymerase binding"/>
    <property type="evidence" value="ECO:0007669"/>
    <property type="project" value="InterPro"/>
</dbReference>
<dbReference type="GO" id="GO:0006354">
    <property type="term" value="P:DNA-templated transcription elongation"/>
    <property type="evidence" value="ECO:0000318"/>
    <property type="project" value="GO_Central"/>
</dbReference>
<dbReference type="GO" id="GO:0032784">
    <property type="term" value="P:regulation of DNA-templated transcription elongation"/>
    <property type="evidence" value="ECO:0007669"/>
    <property type="project" value="InterPro"/>
</dbReference>
<dbReference type="FunFam" id="3.10.50.30:FF:000006">
    <property type="entry name" value="Nucleoside diphosphate kinase regulator"/>
    <property type="match status" value="1"/>
</dbReference>
<dbReference type="Gene3D" id="3.10.50.30">
    <property type="entry name" value="Transcription elongation factor, GreA/GreB, C-terminal domain"/>
    <property type="match status" value="1"/>
</dbReference>
<dbReference type="InterPro" id="IPR036953">
    <property type="entry name" value="GreA/GreB_C_sf"/>
</dbReference>
<dbReference type="InterPro" id="IPR001437">
    <property type="entry name" value="Tscrpt_elong_fac_GreA/B_C"/>
</dbReference>
<dbReference type="InterPro" id="IPR023459">
    <property type="entry name" value="Tscrpt_elong_fac_GreA/B_fam"/>
</dbReference>
<dbReference type="NCBIfam" id="NF004548">
    <property type="entry name" value="PRK05892.1"/>
    <property type="match status" value="1"/>
</dbReference>
<dbReference type="PANTHER" id="PTHR30437">
    <property type="entry name" value="TRANSCRIPTION ELONGATION FACTOR GREA"/>
    <property type="match status" value="1"/>
</dbReference>
<dbReference type="PANTHER" id="PTHR30437:SF4">
    <property type="entry name" value="TRANSCRIPTION ELONGATION FACTOR GREA"/>
    <property type="match status" value="1"/>
</dbReference>
<dbReference type="Pfam" id="PF01272">
    <property type="entry name" value="GreA_GreB"/>
    <property type="match status" value="1"/>
</dbReference>
<dbReference type="PIRSF" id="PIRSF006092">
    <property type="entry name" value="GreA_GreB"/>
    <property type="match status" value="1"/>
</dbReference>
<dbReference type="SUPFAM" id="SSF54534">
    <property type="entry name" value="FKBP-like"/>
    <property type="match status" value="1"/>
</dbReference>
<feature type="chain" id="PRO_0000104150" description="Uncharacterized protein Rv3788">
    <location>
        <begin position="1"/>
        <end position="161"/>
    </location>
</feature>